<protein>
    <recommendedName>
        <fullName evidence="1">3-dehydroquinate dehydratase</fullName>
        <shortName evidence="1">3-dehydroquinase</shortName>
        <ecNumber evidence="1">4.2.1.10</ecNumber>
    </recommendedName>
    <alternativeName>
        <fullName evidence="1">Type II DHQase</fullName>
    </alternativeName>
</protein>
<evidence type="ECO:0000255" key="1">
    <source>
        <dbReference type="HAMAP-Rule" id="MF_00169"/>
    </source>
</evidence>
<gene>
    <name evidence="1" type="primary">aroQ</name>
    <name type="ordered locus">Suden_0687</name>
</gene>
<accession>Q30SR5</accession>
<dbReference type="EC" id="4.2.1.10" evidence="1"/>
<dbReference type="EMBL" id="CP000153">
    <property type="protein sequence ID" value="ABB43966.1"/>
    <property type="molecule type" value="Genomic_DNA"/>
</dbReference>
<dbReference type="RefSeq" id="WP_011372320.1">
    <property type="nucleotide sequence ID" value="NC_007575.1"/>
</dbReference>
<dbReference type="SMR" id="Q30SR5"/>
<dbReference type="STRING" id="326298.Suden_0687"/>
<dbReference type="KEGG" id="tdn:Suden_0687"/>
<dbReference type="eggNOG" id="COG0757">
    <property type="taxonomic scope" value="Bacteria"/>
</dbReference>
<dbReference type="HOGENOM" id="CLU_090968_2_0_7"/>
<dbReference type="OrthoDB" id="9790793at2"/>
<dbReference type="UniPathway" id="UPA00053">
    <property type="reaction ID" value="UER00086"/>
</dbReference>
<dbReference type="Proteomes" id="UP000002714">
    <property type="component" value="Chromosome"/>
</dbReference>
<dbReference type="GO" id="GO:0003855">
    <property type="term" value="F:3-dehydroquinate dehydratase activity"/>
    <property type="evidence" value="ECO:0007669"/>
    <property type="project" value="UniProtKB-UniRule"/>
</dbReference>
<dbReference type="GO" id="GO:0008652">
    <property type="term" value="P:amino acid biosynthetic process"/>
    <property type="evidence" value="ECO:0007669"/>
    <property type="project" value="UniProtKB-KW"/>
</dbReference>
<dbReference type="GO" id="GO:0009073">
    <property type="term" value="P:aromatic amino acid family biosynthetic process"/>
    <property type="evidence" value="ECO:0007669"/>
    <property type="project" value="UniProtKB-KW"/>
</dbReference>
<dbReference type="GO" id="GO:0009423">
    <property type="term" value="P:chorismate biosynthetic process"/>
    <property type="evidence" value="ECO:0007669"/>
    <property type="project" value="UniProtKB-UniRule"/>
</dbReference>
<dbReference type="GO" id="GO:0019631">
    <property type="term" value="P:quinate catabolic process"/>
    <property type="evidence" value="ECO:0007669"/>
    <property type="project" value="TreeGrafter"/>
</dbReference>
<dbReference type="CDD" id="cd00466">
    <property type="entry name" value="DHQase_II"/>
    <property type="match status" value="1"/>
</dbReference>
<dbReference type="Gene3D" id="3.40.50.9100">
    <property type="entry name" value="Dehydroquinase, class II"/>
    <property type="match status" value="1"/>
</dbReference>
<dbReference type="HAMAP" id="MF_00169">
    <property type="entry name" value="AroQ"/>
    <property type="match status" value="1"/>
</dbReference>
<dbReference type="InterPro" id="IPR001874">
    <property type="entry name" value="DHquinase_II"/>
</dbReference>
<dbReference type="InterPro" id="IPR018509">
    <property type="entry name" value="DHquinase_II_CS"/>
</dbReference>
<dbReference type="InterPro" id="IPR036441">
    <property type="entry name" value="DHquinase_II_sf"/>
</dbReference>
<dbReference type="NCBIfam" id="TIGR01088">
    <property type="entry name" value="aroQ"/>
    <property type="match status" value="1"/>
</dbReference>
<dbReference type="NCBIfam" id="NF003805">
    <property type="entry name" value="PRK05395.1-2"/>
    <property type="match status" value="1"/>
</dbReference>
<dbReference type="NCBIfam" id="NF003806">
    <property type="entry name" value="PRK05395.1-3"/>
    <property type="match status" value="1"/>
</dbReference>
<dbReference type="NCBIfam" id="NF003807">
    <property type="entry name" value="PRK05395.1-4"/>
    <property type="match status" value="1"/>
</dbReference>
<dbReference type="PANTHER" id="PTHR21272">
    <property type="entry name" value="CATABOLIC 3-DEHYDROQUINASE"/>
    <property type="match status" value="1"/>
</dbReference>
<dbReference type="PANTHER" id="PTHR21272:SF3">
    <property type="entry name" value="CATABOLIC 3-DEHYDROQUINASE"/>
    <property type="match status" value="1"/>
</dbReference>
<dbReference type="Pfam" id="PF01220">
    <property type="entry name" value="DHquinase_II"/>
    <property type="match status" value="1"/>
</dbReference>
<dbReference type="PIRSF" id="PIRSF001399">
    <property type="entry name" value="DHquinase_II"/>
    <property type="match status" value="1"/>
</dbReference>
<dbReference type="SUPFAM" id="SSF52304">
    <property type="entry name" value="Type II 3-dehydroquinate dehydratase"/>
    <property type="match status" value="1"/>
</dbReference>
<dbReference type="PROSITE" id="PS01029">
    <property type="entry name" value="DEHYDROQUINASE_II"/>
    <property type="match status" value="1"/>
</dbReference>
<name>AROQ_SULDN</name>
<organism>
    <name type="scientific">Sulfurimonas denitrificans (strain ATCC 33889 / DSM 1251)</name>
    <name type="common">Thiomicrospira denitrificans (strain ATCC 33889 / DSM 1251)</name>
    <dbReference type="NCBI Taxonomy" id="326298"/>
    <lineage>
        <taxon>Bacteria</taxon>
        <taxon>Pseudomonadati</taxon>
        <taxon>Campylobacterota</taxon>
        <taxon>Epsilonproteobacteria</taxon>
        <taxon>Campylobacterales</taxon>
        <taxon>Sulfurimonadaceae</taxon>
        <taxon>Sulfurimonas</taxon>
    </lineage>
</organism>
<sequence length="160" mass="17805">MKIAVIQGPNLNMLGVREQQIYGSMKLEQIHAQMRDFAAQSGLEIEFFQSNLEGEIVDKIQECYGDVNGIIINAAAYTHTSIAIRDAISAVNLPTVEVHISNINRREEFRKQNMIAPVCTSSIVGFGPFGYHLAMVGMIQILNEIKAVQEMQKQQAPQAE</sequence>
<keyword id="KW-0028">Amino-acid biosynthesis</keyword>
<keyword id="KW-0057">Aromatic amino acid biosynthesis</keyword>
<keyword id="KW-0456">Lyase</keyword>
<keyword id="KW-1185">Reference proteome</keyword>
<reference key="1">
    <citation type="journal article" date="2008" name="Appl. Environ. Microbiol.">
        <title>Genome of the epsilonproteobacterial chemolithoautotroph Sulfurimonas denitrificans.</title>
        <authorList>
            <person name="Sievert S.M."/>
            <person name="Scott K.M."/>
            <person name="Klotz M.G."/>
            <person name="Chain P.S.G."/>
            <person name="Hauser L.J."/>
            <person name="Hemp J."/>
            <person name="Huegler M."/>
            <person name="Land M."/>
            <person name="Lapidus A."/>
            <person name="Larimer F.W."/>
            <person name="Lucas S."/>
            <person name="Malfatti S.A."/>
            <person name="Meyer F."/>
            <person name="Paulsen I.T."/>
            <person name="Ren Q."/>
            <person name="Simon J."/>
            <person name="Bailey K."/>
            <person name="Diaz E."/>
            <person name="Fitzpatrick K.A."/>
            <person name="Glover B."/>
            <person name="Gwatney N."/>
            <person name="Korajkic A."/>
            <person name="Long A."/>
            <person name="Mobberley J.M."/>
            <person name="Pantry S.N."/>
            <person name="Pazder G."/>
            <person name="Peterson S."/>
            <person name="Quintanilla J.D."/>
            <person name="Sprinkle R."/>
            <person name="Stephens J."/>
            <person name="Thomas P."/>
            <person name="Vaughn R."/>
            <person name="Weber M.J."/>
            <person name="Wooten L.L."/>
        </authorList>
    </citation>
    <scope>NUCLEOTIDE SEQUENCE [LARGE SCALE GENOMIC DNA]</scope>
    <source>
        <strain>ATCC 33889 / DSM 1251</strain>
    </source>
</reference>
<comment type="function">
    <text evidence="1">Catalyzes a trans-dehydration via an enolate intermediate.</text>
</comment>
<comment type="catalytic activity">
    <reaction evidence="1">
        <text>3-dehydroquinate = 3-dehydroshikimate + H2O</text>
        <dbReference type="Rhea" id="RHEA:21096"/>
        <dbReference type="ChEBI" id="CHEBI:15377"/>
        <dbReference type="ChEBI" id="CHEBI:16630"/>
        <dbReference type="ChEBI" id="CHEBI:32364"/>
        <dbReference type="EC" id="4.2.1.10"/>
    </reaction>
</comment>
<comment type="pathway">
    <text evidence="1">Metabolic intermediate biosynthesis; chorismate biosynthesis; chorismate from D-erythrose 4-phosphate and phosphoenolpyruvate: step 3/7.</text>
</comment>
<comment type="subunit">
    <text evidence="1">Homododecamer.</text>
</comment>
<comment type="similarity">
    <text evidence="1">Belongs to the type-II 3-dehydroquinase family.</text>
</comment>
<feature type="chain" id="PRO_1000023530" description="3-dehydroquinate dehydratase">
    <location>
        <begin position="1"/>
        <end position="160"/>
    </location>
</feature>
<feature type="active site" description="Proton acceptor" evidence="1">
    <location>
        <position position="22"/>
    </location>
</feature>
<feature type="active site" description="Proton donor" evidence="1">
    <location>
        <position position="99"/>
    </location>
</feature>
<feature type="binding site" evidence="1">
    <location>
        <position position="73"/>
    </location>
    <ligand>
        <name>substrate</name>
    </ligand>
</feature>
<feature type="binding site" evidence="1">
    <location>
        <position position="79"/>
    </location>
    <ligand>
        <name>substrate</name>
    </ligand>
</feature>
<feature type="binding site" evidence="1">
    <location>
        <position position="86"/>
    </location>
    <ligand>
        <name>substrate</name>
    </ligand>
</feature>
<feature type="binding site" evidence="1">
    <location>
        <begin position="100"/>
        <end position="101"/>
    </location>
    <ligand>
        <name>substrate</name>
    </ligand>
</feature>
<feature type="binding site" evidence="1">
    <location>
        <position position="110"/>
    </location>
    <ligand>
        <name>substrate</name>
    </ligand>
</feature>
<feature type="site" description="Transition state stabilizer" evidence="1">
    <location>
        <position position="17"/>
    </location>
</feature>
<proteinExistence type="inferred from homology"/>